<name>AMPA_METSV</name>
<proteinExistence type="inferred from homology"/>
<protein>
    <recommendedName>
        <fullName>Probable cytosol aminopeptidase</fullName>
        <ecNumber>3.4.11.1</ecNumber>
    </recommendedName>
    <alternativeName>
        <fullName>Leucine aminopeptidase</fullName>
        <shortName>LAP</shortName>
        <ecNumber>3.4.11.10</ecNumber>
    </alternativeName>
    <alternativeName>
        <fullName>Leucyl aminopeptidase</fullName>
    </alternativeName>
</protein>
<reference key="1">
    <citation type="journal article" date="1995" name="FEMS Microbiol. Lett.">
        <title>Cloning and sequence analysis of the aminopeptidase My gene from Mycoplasma salivarium.</title>
        <authorList>
            <person name="Shibata K.I."/>
            <person name="Tsuchida N."/>
            <person name="Watanabe T."/>
        </authorList>
    </citation>
    <scope>NUCLEOTIDE SEQUENCE [GENOMIC DNA]</scope>
    <source>
        <strain>ATCC 23064 / NBRC 14478 / NCTC 10113 / H110</strain>
    </source>
</reference>
<keyword id="KW-0031">Aminopeptidase</keyword>
<keyword id="KW-0963">Cytoplasm</keyword>
<keyword id="KW-0378">Hydrolase</keyword>
<keyword id="KW-0464">Manganese</keyword>
<keyword id="KW-0479">Metal-binding</keyword>
<keyword id="KW-0645">Protease</keyword>
<feature type="chain" id="PRO_0000165769" description="Probable cytosol aminopeptidase">
    <location>
        <begin position="1"/>
        <end position="520"/>
    </location>
</feature>
<feature type="region of interest" description="Disordered" evidence="3">
    <location>
        <begin position="488"/>
        <end position="520"/>
    </location>
</feature>
<feature type="active site" evidence="2">
    <location>
        <position position="244"/>
    </location>
</feature>
<feature type="active site" evidence="2">
    <location>
        <position position="318"/>
    </location>
</feature>
<feature type="binding site" evidence="1">
    <location>
        <position position="232"/>
    </location>
    <ligand>
        <name>Mn(2+)</name>
        <dbReference type="ChEBI" id="CHEBI:29035"/>
        <label>2</label>
    </ligand>
</feature>
<feature type="binding site" evidence="1">
    <location>
        <position position="237"/>
    </location>
    <ligand>
        <name>Mn(2+)</name>
        <dbReference type="ChEBI" id="CHEBI:29035"/>
        <label>1</label>
    </ligand>
</feature>
<feature type="binding site" evidence="1">
    <location>
        <position position="237"/>
    </location>
    <ligand>
        <name>Mn(2+)</name>
        <dbReference type="ChEBI" id="CHEBI:29035"/>
        <label>2</label>
    </ligand>
</feature>
<feature type="binding site" evidence="1">
    <location>
        <position position="255"/>
    </location>
    <ligand>
        <name>Mn(2+)</name>
        <dbReference type="ChEBI" id="CHEBI:29035"/>
        <label>2</label>
    </ligand>
</feature>
<feature type="binding site" evidence="1">
    <location>
        <position position="314"/>
    </location>
    <ligand>
        <name>Mn(2+)</name>
        <dbReference type="ChEBI" id="CHEBI:29035"/>
        <label>1</label>
    </ligand>
</feature>
<feature type="binding site" evidence="1">
    <location>
        <position position="316"/>
    </location>
    <ligand>
        <name>Mn(2+)</name>
        <dbReference type="ChEBI" id="CHEBI:29035"/>
        <label>1</label>
    </ligand>
</feature>
<feature type="binding site" evidence="1">
    <location>
        <position position="316"/>
    </location>
    <ligand>
        <name>Mn(2+)</name>
        <dbReference type="ChEBI" id="CHEBI:29035"/>
        <label>2</label>
    </ligand>
</feature>
<sequence length="520" mass="58080">MELIKEIETSRNSSVLLKAIFEGDDAPTLLVKKQSQITEYLKENVAYVYLGKKSEFGYKDAYEFARDLAENCARSYQLDLTTFVTEKLCIKGVVDAFTKGINFSAFQYYNLKTFTKRVNENSLSFYLENISQDVLNVFKKALILVDAQNFARNLGVTPPNELNSEQLAEIIRKDFKKYHNLKVKVLERKQIELLGMDLLLSVNKGSVYEPRVVIIEYKGNPSSQEKTVLVGKGITFDSGGYSLKPPKFMLGMKYDMSGSAIVAAVMKAIAQLKPNKNVSAIMCITDNRINGDASLPDSVYTSMSGKTVEVNNTDAEGRLVLADRLYYGATKLNATRLIDTATLTGTMLTALGQTYSGIYATSCKIWHQFEDAAKIAHEKVWRMPLHEDFNKTNKESLVADLNNYSNNEKSDCNTAAMFLKEFTNNVPYIHCDVAGTADKKGMGLGILVSTFVEFGKSQQRNCESCECDEQKCETKNCNIEESTTKIVKAKKSTAKKATTKKTTTRKTASKTKSTKSKARK</sequence>
<organism>
    <name type="scientific">Metamycoplasma salivarium</name>
    <name type="common">Mycoplasma salivarium</name>
    <dbReference type="NCBI Taxonomy" id="2124"/>
    <lineage>
        <taxon>Bacteria</taxon>
        <taxon>Bacillati</taxon>
        <taxon>Mycoplasmatota</taxon>
        <taxon>Mycoplasmoidales</taxon>
        <taxon>Metamycoplasmataceae</taxon>
        <taxon>Metamycoplasma</taxon>
    </lineage>
</organism>
<comment type="function">
    <text evidence="1">Presumably involved in the processing and regular turnover of intracellular proteins. Catalyzes the removal of unsubstituted N-terminal amino acids from various peptides (By similarity).</text>
</comment>
<comment type="catalytic activity">
    <reaction>
        <text>Release of an N-terminal amino acid, Xaa-|-Yaa-, in which Xaa is preferably Leu, but may be other amino acids including Pro although not Arg or Lys, and Yaa may be Pro. Amino acid amides and methyl esters are also readily hydrolyzed, but rates on arylamides are exceedingly low.</text>
        <dbReference type="EC" id="3.4.11.1"/>
    </reaction>
</comment>
<comment type="catalytic activity">
    <reaction>
        <text>Release of an N-terminal amino acid, preferentially leucine, but not glutamic or aspartic acids.</text>
        <dbReference type="EC" id="3.4.11.10"/>
    </reaction>
</comment>
<comment type="cofactor">
    <cofactor evidence="1">
        <name>Mn(2+)</name>
        <dbReference type="ChEBI" id="CHEBI:29035"/>
    </cofactor>
    <text evidence="1">Binds 2 manganese ions per subunit.</text>
</comment>
<comment type="subcellular location">
    <subcellularLocation>
        <location evidence="1">Cytoplasm</location>
    </subcellularLocation>
</comment>
<comment type="similarity">
    <text evidence="4">Belongs to the peptidase M17 family.</text>
</comment>
<evidence type="ECO:0000250" key="1"/>
<evidence type="ECO:0000255" key="2"/>
<evidence type="ECO:0000256" key="3">
    <source>
        <dbReference type="SAM" id="MobiDB-lite"/>
    </source>
</evidence>
<evidence type="ECO:0000305" key="4"/>
<gene>
    <name type="primary">pepA</name>
</gene>
<dbReference type="EC" id="3.4.11.1"/>
<dbReference type="EC" id="3.4.11.10"/>
<dbReference type="EMBL" id="D17450">
    <property type="protein sequence ID" value="BAA04266.1"/>
    <property type="molecule type" value="Genomic_DNA"/>
</dbReference>
<dbReference type="SMR" id="P47707"/>
<dbReference type="GO" id="GO:0005737">
    <property type="term" value="C:cytoplasm"/>
    <property type="evidence" value="ECO:0007669"/>
    <property type="project" value="UniProtKB-SubCell"/>
</dbReference>
<dbReference type="GO" id="GO:0030145">
    <property type="term" value="F:manganese ion binding"/>
    <property type="evidence" value="ECO:0007669"/>
    <property type="project" value="UniProtKB-UniRule"/>
</dbReference>
<dbReference type="GO" id="GO:0070006">
    <property type="term" value="F:metalloaminopeptidase activity"/>
    <property type="evidence" value="ECO:0007669"/>
    <property type="project" value="InterPro"/>
</dbReference>
<dbReference type="GO" id="GO:0006508">
    <property type="term" value="P:proteolysis"/>
    <property type="evidence" value="ECO:0007669"/>
    <property type="project" value="UniProtKB-KW"/>
</dbReference>
<dbReference type="CDD" id="cd00433">
    <property type="entry name" value="Peptidase_M17"/>
    <property type="match status" value="1"/>
</dbReference>
<dbReference type="Gene3D" id="3.40.220.10">
    <property type="entry name" value="Leucine Aminopeptidase, subunit E, domain 1"/>
    <property type="match status" value="1"/>
</dbReference>
<dbReference type="Gene3D" id="3.40.630.10">
    <property type="entry name" value="Zn peptidases"/>
    <property type="match status" value="1"/>
</dbReference>
<dbReference type="HAMAP" id="MF_00181">
    <property type="entry name" value="Cytosol_peptidase_M17"/>
    <property type="match status" value="1"/>
</dbReference>
<dbReference type="InterPro" id="IPR011356">
    <property type="entry name" value="Leucine_aapep/pepB"/>
</dbReference>
<dbReference type="InterPro" id="IPR043472">
    <property type="entry name" value="Macro_dom-like"/>
</dbReference>
<dbReference type="InterPro" id="IPR000819">
    <property type="entry name" value="Peptidase_M17_C"/>
</dbReference>
<dbReference type="InterPro" id="IPR023042">
    <property type="entry name" value="Peptidase_M17_leu_NH2_pept"/>
</dbReference>
<dbReference type="PANTHER" id="PTHR11963:SF23">
    <property type="entry name" value="CYTOSOL AMINOPEPTIDASE"/>
    <property type="match status" value="1"/>
</dbReference>
<dbReference type="PANTHER" id="PTHR11963">
    <property type="entry name" value="LEUCINE AMINOPEPTIDASE-RELATED"/>
    <property type="match status" value="1"/>
</dbReference>
<dbReference type="Pfam" id="PF00883">
    <property type="entry name" value="Peptidase_M17"/>
    <property type="match status" value="1"/>
</dbReference>
<dbReference type="PRINTS" id="PR00481">
    <property type="entry name" value="LAMNOPPTDASE"/>
</dbReference>
<dbReference type="SUPFAM" id="SSF52949">
    <property type="entry name" value="Macro domain-like"/>
    <property type="match status" value="1"/>
</dbReference>
<dbReference type="SUPFAM" id="SSF53187">
    <property type="entry name" value="Zn-dependent exopeptidases"/>
    <property type="match status" value="1"/>
</dbReference>
<dbReference type="PROSITE" id="PS00631">
    <property type="entry name" value="CYTOSOL_AP"/>
    <property type="match status" value="1"/>
</dbReference>
<accession>P47707</accession>